<comment type="function">
    <text evidence="1">Converts heme B (protoheme IX) to heme O by substitution of the vinyl group on carbon 2 of heme B porphyrin ring with a hydroxyethyl farnesyl side group.</text>
</comment>
<comment type="catalytic activity">
    <reaction evidence="1">
        <text>heme b + (2E,6E)-farnesyl diphosphate + H2O = Fe(II)-heme o + diphosphate</text>
        <dbReference type="Rhea" id="RHEA:28070"/>
        <dbReference type="ChEBI" id="CHEBI:15377"/>
        <dbReference type="ChEBI" id="CHEBI:33019"/>
        <dbReference type="ChEBI" id="CHEBI:60344"/>
        <dbReference type="ChEBI" id="CHEBI:60530"/>
        <dbReference type="ChEBI" id="CHEBI:175763"/>
        <dbReference type="EC" id="2.5.1.141"/>
    </reaction>
</comment>
<comment type="pathway">
    <text evidence="1">Porphyrin-containing compound metabolism; heme O biosynthesis; heme O from protoheme: step 1/1.</text>
</comment>
<comment type="subcellular location">
    <subcellularLocation>
        <location evidence="1">Cell inner membrane</location>
        <topology evidence="1">Multi-pass membrane protein</topology>
    </subcellularLocation>
</comment>
<comment type="miscellaneous">
    <text evidence="1">Carbon 2 of the heme B porphyrin ring is defined according to the Fischer nomenclature.</text>
</comment>
<comment type="similarity">
    <text evidence="1">Belongs to the UbiA prenyltransferase family. Protoheme IX farnesyltransferase subfamily.</text>
</comment>
<sequence>MTSLSNSLSADAGRASLASAAGGEVSDFFALLKPRVMVLVIFTALVGMVVSDATVNPVIAAISLLMIAVGAGASGCLNMWWDADIDALMTRTAKRPIPDGRIRPDEALAFGIVLSVGSVLILGLASNWLAAGLLAFTIVFYAVIYSMWLKRATAQNIVIGGAAGALPPVVGQAAVTGHVGIESLVLFAIIFIWTPPHFWALALVKSGEYARAGIPMMPNVAGPDSTRRQIVWYSLLLAPLALVPVWLGFGGWLYAVVGVLGGLGMLAGAVQVYRLREGEPERKAAMGLFAFSILYLFLLFSALLAEQGLGLFRAVAA</sequence>
<proteinExistence type="inferred from homology"/>
<dbReference type="EC" id="2.5.1.141" evidence="1"/>
<dbReference type="EMBL" id="CP001029">
    <property type="protein sequence ID" value="ACB81608.1"/>
    <property type="molecule type" value="Genomic_DNA"/>
</dbReference>
<dbReference type="RefSeq" id="WP_012455325.1">
    <property type="nucleotide sequence ID" value="NC_010725.1"/>
</dbReference>
<dbReference type="SMR" id="B1ZKN8"/>
<dbReference type="STRING" id="441620.Mpop_3457"/>
<dbReference type="KEGG" id="mpo:Mpop_3457"/>
<dbReference type="eggNOG" id="COG0109">
    <property type="taxonomic scope" value="Bacteria"/>
</dbReference>
<dbReference type="HOGENOM" id="CLU_029631_0_2_5"/>
<dbReference type="OrthoDB" id="9814417at2"/>
<dbReference type="UniPathway" id="UPA00834">
    <property type="reaction ID" value="UER00712"/>
</dbReference>
<dbReference type="Proteomes" id="UP000007136">
    <property type="component" value="Chromosome"/>
</dbReference>
<dbReference type="GO" id="GO:0005886">
    <property type="term" value="C:plasma membrane"/>
    <property type="evidence" value="ECO:0007669"/>
    <property type="project" value="UniProtKB-SubCell"/>
</dbReference>
<dbReference type="GO" id="GO:0008495">
    <property type="term" value="F:protoheme IX farnesyltransferase activity"/>
    <property type="evidence" value="ECO:0007669"/>
    <property type="project" value="UniProtKB-UniRule"/>
</dbReference>
<dbReference type="GO" id="GO:0048034">
    <property type="term" value="P:heme O biosynthetic process"/>
    <property type="evidence" value="ECO:0007669"/>
    <property type="project" value="UniProtKB-UniRule"/>
</dbReference>
<dbReference type="CDD" id="cd13957">
    <property type="entry name" value="PT_UbiA_Cox10"/>
    <property type="match status" value="1"/>
</dbReference>
<dbReference type="Gene3D" id="1.10.357.140">
    <property type="entry name" value="UbiA prenyltransferase"/>
    <property type="match status" value="1"/>
</dbReference>
<dbReference type="HAMAP" id="MF_00154">
    <property type="entry name" value="CyoE_CtaB"/>
    <property type="match status" value="1"/>
</dbReference>
<dbReference type="InterPro" id="IPR006369">
    <property type="entry name" value="Protohaem_IX_farnesylTrfase"/>
</dbReference>
<dbReference type="InterPro" id="IPR000537">
    <property type="entry name" value="UbiA_prenyltransferase"/>
</dbReference>
<dbReference type="InterPro" id="IPR030470">
    <property type="entry name" value="UbiA_prenylTrfase_CS"/>
</dbReference>
<dbReference type="InterPro" id="IPR044878">
    <property type="entry name" value="UbiA_sf"/>
</dbReference>
<dbReference type="NCBIfam" id="TIGR01473">
    <property type="entry name" value="cyoE_ctaB"/>
    <property type="match status" value="1"/>
</dbReference>
<dbReference type="NCBIfam" id="NF003349">
    <property type="entry name" value="PRK04375.1-2"/>
    <property type="match status" value="1"/>
</dbReference>
<dbReference type="PANTHER" id="PTHR43448:SF7">
    <property type="entry name" value="4-HYDROXYBENZOATE SOLANESYLTRANSFERASE"/>
    <property type="match status" value="1"/>
</dbReference>
<dbReference type="PANTHER" id="PTHR43448">
    <property type="entry name" value="PROTOHEME IX FARNESYLTRANSFERASE, MITOCHONDRIAL"/>
    <property type="match status" value="1"/>
</dbReference>
<dbReference type="Pfam" id="PF01040">
    <property type="entry name" value="UbiA"/>
    <property type="match status" value="1"/>
</dbReference>
<dbReference type="PROSITE" id="PS00943">
    <property type="entry name" value="UBIA"/>
    <property type="match status" value="1"/>
</dbReference>
<feature type="chain" id="PRO_0000346057" description="Protoheme IX farnesyltransferase">
    <location>
        <begin position="1"/>
        <end position="317"/>
    </location>
</feature>
<feature type="transmembrane region" description="Helical" evidence="1">
    <location>
        <begin position="36"/>
        <end position="56"/>
    </location>
</feature>
<feature type="transmembrane region" description="Helical" evidence="1">
    <location>
        <begin position="57"/>
        <end position="77"/>
    </location>
</feature>
<feature type="transmembrane region" description="Helical" evidence="1">
    <location>
        <begin position="108"/>
        <end position="128"/>
    </location>
</feature>
<feature type="transmembrane region" description="Helical" evidence="1">
    <location>
        <begin position="129"/>
        <end position="149"/>
    </location>
</feature>
<feature type="transmembrane region" description="Helical" evidence="1">
    <location>
        <begin position="157"/>
        <end position="177"/>
    </location>
</feature>
<feature type="transmembrane region" description="Helical" evidence="1">
    <location>
        <begin position="184"/>
        <end position="204"/>
    </location>
</feature>
<feature type="transmembrane region" description="Helical" evidence="1">
    <location>
        <begin position="230"/>
        <end position="247"/>
    </location>
</feature>
<feature type="transmembrane region" description="Helical" evidence="1">
    <location>
        <begin position="251"/>
        <end position="273"/>
    </location>
</feature>
<feature type="transmembrane region" description="Helical" evidence="1">
    <location>
        <begin position="284"/>
        <end position="304"/>
    </location>
</feature>
<gene>
    <name evidence="1" type="primary">ctaB</name>
    <name type="ordered locus">Mpop_3457</name>
</gene>
<keyword id="KW-0997">Cell inner membrane</keyword>
<keyword id="KW-1003">Cell membrane</keyword>
<keyword id="KW-0350">Heme biosynthesis</keyword>
<keyword id="KW-0472">Membrane</keyword>
<keyword id="KW-0808">Transferase</keyword>
<keyword id="KW-0812">Transmembrane</keyword>
<keyword id="KW-1133">Transmembrane helix</keyword>
<protein>
    <recommendedName>
        <fullName evidence="1">Protoheme IX farnesyltransferase</fullName>
        <ecNumber evidence="1">2.5.1.141</ecNumber>
    </recommendedName>
    <alternativeName>
        <fullName evidence="1">Heme B farnesyltransferase</fullName>
    </alternativeName>
    <alternativeName>
        <fullName evidence="1">Heme O synthase</fullName>
    </alternativeName>
</protein>
<name>COXX_METPB</name>
<accession>B1ZKN8</accession>
<organism>
    <name type="scientific">Methylorubrum populi (strain ATCC BAA-705 / NCIMB 13946 / BJ001)</name>
    <name type="common">Methylobacterium populi</name>
    <dbReference type="NCBI Taxonomy" id="441620"/>
    <lineage>
        <taxon>Bacteria</taxon>
        <taxon>Pseudomonadati</taxon>
        <taxon>Pseudomonadota</taxon>
        <taxon>Alphaproteobacteria</taxon>
        <taxon>Hyphomicrobiales</taxon>
        <taxon>Methylobacteriaceae</taxon>
        <taxon>Methylorubrum</taxon>
    </lineage>
</organism>
<reference key="1">
    <citation type="submission" date="2008-04" db="EMBL/GenBank/DDBJ databases">
        <title>Complete sequence of chromosome of Methylobacterium populi BJ001.</title>
        <authorList>
            <consortium name="US DOE Joint Genome Institute"/>
            <person name="Copeland A."/>
            <person name="Lucas S."/>
            <person name="Lapidus A."/>
            <person name="Glavina del Rio T."/>
            <person name="Dalin E."/>
            <person name="Tice H."/>
            <person name="Bruce D."/>
            <person name="Goodwin L."/>
            <person name="Pitluck S."/>
            <person name="Chertkov O."/>
            <person name="Brettin T."/>
            <person name="Detter J.C."/>
            <person name="Han C."/>
            <person name="Kuske C.R."/>
            <person name="Schmutz J."/>
            <person name="Larimer F."/>
            <person name="Land M."/>
            <person name="Hauser L."/>
            <person name="Kyrpides N."/>
            <person name="Mikhailova N."/>
            <person name="Marx C."/>
            <person name="Richardson P."/>
        </authorList>
    </citation>
    <scope>NUCLEOTIDE SEQUENCE [LARGE SCALE GENOMIC DNA]</scope>
    <source>
        <strain>ATCC BAA-705 / NCIMB 13946 / BJ001</strain>
    </source>
</reference>
<evidence type="ECO:0000255" key="1">
    <source>
        <dbReference type="HAMAP-Rule" id="MF_00154"/>
    </source>
</evidence>